<protein>
    <recommendedName>
        <fullName evidence="2">MSDIN-like toxin proprotein 2</fullName>
    </recommendedName>
    <component>
        <recommendedName>
            <fullName evidence="2">Toxin MSD2</fullName>
        </recommendedName>
    </component>
</protein>
<sequence>MSDINTARLPFYQFPDFKYPCVGDDIEMVLARGE</sequence>
<comment type="function">
    <text evidence="4">Probable toxin that belongs to the MSDIN-like toxin family responsible for a large number of food poisoning cases and deaths (PubMed:18025465).</text>
</comment>
<comment type="PTM">
    <text evidence="1 4">Processed by the macrocyclase-peptidase enzyme POPB to yield a toxic cyclic decapeptide (PubMed:18025465). POPB first removes 10 residues from the N-terminus (By similarity). Conformational trapping of the remaining peptide forces the enzyme to release this intermediate rather than proceed to macrocyclization (By similarity). The enzyme rebinds the remaining peptide in a different conformation and catalyzes macrocyclization of the N-terminal 10 residues (By similarity).</text>
</comment>
<comment type="similarity">
    <text evidence="3">Belongs to the MSDIN fungal toxin family.</text>
</comment>
<reference key="1">
    <citation type="journal article" date="2007" name="Proc. Natl. Acad. Sci. U.S.A.">
        <title>Gene family encoding the major toxins of lethal Amanita mushrooms.</title>
        <authorList>
            <person name="Hallen H.E."/>
            <person name="Luo H."/>
            <person name="Scott-Craig J.S."/>
            <person name="Walton J.D."/>
        </authorList>
    </citation>
    <scope>NUCLEOTIDE SEQUENCE [GENOMIC DNA]</scope>
    <scope>FUNCTION</scope>
</reference>
<feature type="propeptide" id="PRO_0000443638" evidence="4">
    <location>
        <begin position="1"/>
        <end position="10"/>
    </location>
</feature>
<feature type="peptide" id="PRO_0000443639" description="Toxin MSD2" evidence="4">
    <location>
        <begin position="11"/>
        <end position="20"/>
    </location>
</feature>
<feature type="propeptide" id="PRO_0000443640" evidence="4">
    <location>
        <begin position="21"/>
        <end position="34"/>
    </location>
</feature>
<feature type="cross-link" description="Cyclopeptide (Phe-Pro)" evidence="4">
    <location>
        <begin position="11"/>
        <end position="20"/>
    </location>
</feature>
<feature type="non-terminal residue" evidence="3">
    <location>
        <position position="34"/>
    </location>
</feature>
<gene>
    <name evidence="2" type="primary">MSD2</name>
</gene>
<proteinExistence type="inferred from homology"/>
<evidence type="ECO:0000250" key="1">
    <source>
        <dbReference type="UniProtKB" id="A0A067SLB9"/>
    </source>
</evidence>
<evidence type="ECO:0000303" key="2">
    <source>
    </source>
</evidence>
<evidence type="ECO:0000305" key="3"/>
<evidence type="ECO:0000305" key="4">
    <source>
    </source>
</evidence>
<organism>
    <name type="scientific">Amanita bisporigera</name>
    <name type="common">Destroying angel</name>
    <dbReference type="NCBI Taxonomy" id="87325"/>
    <lineage>
        <taxon>Eukaryota</taxon>
        <taxon>Fungi</taxon>
        <taxon>Dikarya</taxon>
        <taxon>Basidiomycota</taxon>
        <taxon>Agaricomycotina</taxon>
        <taxon>Agaricomycetes</taxon>
        <taxon>Agaricomycetidae</taxon>
        <taxon>Agaricales</taxon>
        <taxon>Pluteineae</taxon>
        <taxon>Amanitaceae</taxon>
        <taxon>Amanita</taxon>
    </lineage>
</organism>
<dbReference type="EMBL" id="EU196145">
    <property type="protein sequence ID" value="ABW87774.1"/>
    <property type="molecule type" value="Genomic_DNA"/>
</dbReference>
<dbReference type="GO" id="GO:0090729">
    <property type="term" value="F:toxin activity"/>
    <property type="evidence" value="ECO:0007669"/>
    <property type="project" value="UniProtKB-KW"/>
</dbReference>
<dbReference type="InterPro" id="IPR027582">
    <property type="entry name" value="Amanitin/phalloidin"/>
</dbReference>
<dbReference type="NCBIfam" id="TIGR04309">
    <property type="entry name" value="amanitin"/>
    <property type="match status" value="1"/>
</dbReference>
<accession>A8W7N0</accession>
<name>MSD2_AMABI</name>
<keyword id="KW-0800">Toxin</keyword>